<sequence>MHASIFAKLEQLSMRLEEVDVMLSNPKVASDVKKFTKLSIERAQLTPVNQQFQAYLSHHRNLEDAKLMLLEDDMDIKAMAKEEMLDVKKKLDHLYLELKKSLLPKDPNDSRNIIIEIRAGTGGNEASIFSSNLFKMYSRYTEKKKWQIEVISSSLGEHGGFKEIIARISGVGVYSKLKFESGAHRVQRVPETESQGRVHTSACTIAIMPEVENIEEVNINMSDVRVDTFRASGAGGQHVNKTNSAVRITHIPTGTVAECQDGRSQHKNKAQALLVLASRIFDLQQQEQHKEQASTRKELIGSGDRSQRIRTYNYPQGRITDHRINLTLYKLSEIMEGNLNAIIEPLIVEQQTSQLTELNDVLS</sequence>
<comment type="function">
    <text evidence="1">Peptide chain release factor 1 directs the termination of translation in response to the peptide chain termination codons UAG and UAA.</text>
</comment>
<comment type="subcellular location">
    <subcellularLocation>
        <location evidence="1">Cytoplasm</location>
    </subcellularLocation>
</comment>
<comment type="PTM">
    <text evidence="1">Methylated by PrmC. Methylation increases the termination efficiency of RF1.</text>
</comment>
<comment type="similarity">
    <text evidence="1">Belongs to the prokaryotic/mitochondrial release factor family.</text>
</comment>
<proteinExistence type="inferred from homology"/>
<gene>
    <name evidence="1" type="primary">prfA</name>
    <name type="ordered locus">Rmag_0731</name>
</gene>
<dbReference type="EMBL" id="CP000488">
    <property type="protein sequence ID" value="ABL02459.1"/>
    <property type="molecule type" value="Genomic_DNA"/>
</dbReference>
<dbReference type="RefSeq" id="WP_011738084.1">
    <property type="nucleotide sequence ID" value="NC_008610.1"/>
</dbReference>
<dbReference type="SMR" id="A1AX02"/>
<dbReference type="STRING" id="413404.Rmag_0731"/>
<dbReference type="KEGG" id="rma:Rmag_0731"/>
<dbReference type="eggNOG" id="COG0216">
    <property type="taxonomic scope" value="Bacteria"/>
</dbReference>
<dbReference type="HOGENOM" id="CLU_036856_0_1_6"/>
<dbReference type="OrthoDB" id="9806673at2"/>
<dbReference type="Proteomes" id="UP000002587">
    <property type="component" value="Chromosome"/>
</dbReference>
<dbReference type="GO" id="GO:0005737">
    <property type="term" value="C:cytoplasm"/>
    <property type="evidence" value="ECO:0007669"/>
    <property type="project" value="UniProtKB-SubCell"/>
</dbReference>
<dbReference type="GO" id="GO:0016149">
    <property type="term" value="F:translation release factor activity, codon specific"/>
    <property type="evidence" value="ECO:0007669"/>
    <property type="project" value="UniProtKB-UniRule"/>
</dbReference>
<dbReference type="FunFam" id="3.30.160.20:FF:000004">
    <property type="entry name" value="Peptide chain release factor 1"/>
    <property type="match status" value="1"/>
</dbReference>
<dbReference type="FunFam" id="3.30.70.1660:FF:000002">
    <property type="entry name" value="Peptide chain release factor 1"/>
    <property type="match status" value="1"/>
</dbReference>
<dbReference type="FunFam" id="3.30.70.1660:FF:000004">
    <property type="entry name" value="Peptide chain release factor 1"/>
    <property type="match status" value="1"/>
</dbReference>
<dbReference type="Gene3D" id="3.30.160.20">
    <property type="match status" value="1"/>
</dbReference>
<dbReference type="Gene3D" id="3.30.70.1660">
    <property type="match status" value="1"/>
</dbReference>
<dbReference type="Gene3D" id="6.10.140.1950">
    <property type="match status" value="1"/>
</dbReference>
<dbReference type="HAMAP" id="MF_00093">
    <property type="entry name" value="Rel_fac_1"/>
    <property type="match status" value="1"/>
</dbReference>
<dbReference type="InterPro" id="IPR005139">
    <property type="entry name" value="PCRF"/>
</dbReference>
<dbReference type="InterPro" id="IPR000352">
    <property type="entry name" value="Pep_chain_release_fac_I"/>
</dbReference>
<dbReference type="InterPro" id="IPR045853">
    <property type="entry name" value="Pep_chain_release_fac_I_sf"/>
</dbReference>
<dbReference type="InterPro" id="IPR050057">
    <property type="entry name" value="Prokaryotic/Mito_RF"/>
</dbReference>
<dbReference type="InterPro" id="IPR004373">
    <property type="entry name" value="RF-1"/>
</dbReference>
<dbReference type="NCBIfam" id="TIGR00019">
    <property type="entry name" value="prfA"/>
    <property type="match status" value="1"/>
</dbReference>
<dbReference type="NCBIfam" id="NF001859">
    <property type="entry name" value="PRK00591.1"/>
    <property type="match status" value="1"/>
</dbReference>
<dbReference type="PANTHER" id="PTHR43804">
    <property type="entry name" value="LD18447P"/>
    <property type="match status" value="1"/>
</dbReference>
<dbReference type="PANTHER" id="PTHR43804:SF7">
    <property type="entry name" value="LD18447P"/>
    <property type="match status" value="1"/>
</dbReference>
<dbReference type="Pfam" id="PF03462">
    <property type="entry name" value="PCRF"/>
    <property type="match status" value="1"/>
</dbReference>
<dbReference type="Pfam" id="PF00472">
    <property type="entry name" value="RF-1"/>
    <property type="match status" value="1"/>
</dbReference>
<dbReference type="SMART" id="SM00937">
    <property type="entry name" value="PCRF"/>
    <property type="match status" value="1"/>
</dbReference>
<dbReference type="SUPFAM" id="SSF75620">
    <property type="entry name" value="Release factor"/>
    <property type="match status" value="1"/>
</dbReference>
<dbReference type="PROSITE" id="PS00745">
    <property type="entry name" value="RF_PROK_I"/>
    <property type="match status" value="1"/>
</dbReference>
<reference key="1">
    <citation type="journal article" date="2007" name="Science">
        <title>The Calyptogena magnifica chemoautotrophic symbiont genome.</title>
        <authorList>
            <person name="Newton I.L.G."/>
            <person name="Woyke T."/>
            <person name="Auchtung T.A."/>
            <person name="Dilly G.F."/>
            <person name="Dutton R.J."/>
            <person name="Fisher M.C."/>
            <person name="Fontanez K.M."/>
            <person name="Lau E."/>
            <person name="Stewart F.J."/>
            <person name="Richardson P.M."/>
            <person name="Barry K.W."/>
            <person name="Saunders E."/>
            <person name="Detter J.C."/>
            <person name="Wu D."/>
            <person name="Eisen J.A."/>
            <person name="Cavanaugh C.M."/>
        </authorList>
    </citation>
    <scope>NUCLEOTIDE SEQUENCE [LARGE SCALE GENOMIC DNA]</scope>
</reference>
<keyword id="KW-0963">Cytoplasm</keyword>
<keyword id="KW-0488">Methylation</keyword>
<keyword id="KW-0648">Protein biosynthesis</keyword>
<name>RF1_RUTMC</name>
<organism>
    <name type="scientific">Ruthia magnifica subsp. Calyptogena magnifica</name>
    <dbReference type="NCBI Taxonomy" id="413404"/>
    <lineage>
        <taxon>Bacteria</taxon>
        <taxon>Pseudomonadati</taxon>
        <taxon>Pseudomonadota</taxon>
        <taxon>Gammaproteobacteria</taxon>
        <taxon>Candidatus Pseudothioglobaceae</taxon>
        <taxon>Candidatus Ruthturnera</taxon>
    </lineage>
</organism>
<feature type="chain" id="PRO_1000004945" description="Peptide chain release factor 1">
    <location>
        <begin position="1"/>
        <end position="363"/>
    </location>
</feature>
<feature type="region of interest" description="Disordered" evidence="2">
    <location>
        <begin position="287"/>
        <end position="306"/>
    </location>
</feature>
<feature type="compositionally biased region" description="Basic and acidic residues" evidence="2">
    <location>
        <begin position="287"/>
        <end position="299"/>
    </location>
</feature>
<feature type="modified residue" description="N5-methylglutamine" evidence="1">
    <location>
        <position position="237"/>
    </location>
</feature>
<protein>
    <recommendedName>
        <fullName evidence="1">Peptide chain release factor 1</fullName>
        <shortName evidence="1">RF-1</shortName>
    </recommendedName>
</protein>
<evidence type="ECO:0000255" key="1">
    <source>
        <dbReference type="HAMAP-Rule" id="MF_00093"/>
    </source>
</evidence>
<evidence type="ECO:0000256" key="2">
    <source>
        <dbReference type="SAM" id="MobiDB-lite"/>
    </source>
</evidence>
<accession>A1AX02</accession>